<reference key="1">
    <citation type="journal article" date="1997" name="J. Bacteriol.">
        <title>Structure and expression of a pyrimidine gene cluster from the extreme thermophile Thermus strain ZO5.</title>
        <authorList>
            <person name="van de Casteele M."/>
            <person name="Chen P."/>
            <person name="Roovers M."/>
            <person name="Legrain C."/>
            <person name="Glansdorff N."/>
        </authorList>
    </citation>
    <scope>NUCLEOTIDE SEQUENCE [GENOMIC DNA]</scope>
    <source>
        <strain>ZO5</strain>
    </source>
</reference>
<sequence>MRHLLDFQGWTRPEVESLLDTARVMREVLERPVKKVPALQGFTVATVFFEPSTRTRISFELAARRMSADVVSFAAQTSSLQKGESYKDTLLTLEAMGVDAYVIRADSAGVPHQATRWVKGAVINGGDGRRAHPTQALLDAYTLLEALGTLEGKKVAIVGDILHSRVARSNAELLPLLGAQVFCAGPPSLLPQSLPGAHLTPRLEEALEEADAVMVLRLQKERMEAGLVHLEDYIARYQVTEKRLALAKPQAPLLHPGPMNRDVELEGTLADSARSLVNRQVQNGVAVRMAVLYHLLVGKGR</sequence>
<comment type="function">
    <text evidence="1">Catalyzes the condensation of carbamoyl phosphate and aspartate to form carbamoyl aspartate and inorganic phosphate, the committed step in the de novo pyrimidine nucleotide biosynthesis pathway.</text>
</comment>
<comment type="catalytic activity">
    <reaction evidence="1">
        <text>carbamoyl phosphate + L-aspartate = N-carbamoyl-L-aspartate + phosphate + H(+)</text>
        <dbReference type="Rhea" id="RHEA:20013"/>
        <dbReference type="ChEBI" id="CHEBI:15378"/>
        <dbReference type="ChEBI" id="CHEBI:29991"/>
        <dbReference type="ChEBI" id="CHEBI:32814"/>
        <dbReference type="ChEBI" id="CHEBI:43474"/>
        <dbReference type="ChEBI" id="CHEBI:58228"/>
        <dbReference type="EC" id="2.1.3.2"/>
    </reaction>
</comment>
<comment type="pathway">
    <text evidence="1">Pyrimidine metabolism; UMP biosynthesis via de novo pathway; (S)-dihydroorotate from bicarbonate: step 2/3.</text>
</comment>
<comment type="subunit">
    <text evidence="1">Heterododecamer (2C3:3R2) of six catalytic PyrB chains organized as two trimers (C3), and six regulatory PyrI chains organized as three dimers (R2).</text>
</comment>
<comment type="similarity">
    <text evidence="1 2">Belongs to the aspartate/ornithine carbamoyltransferase superfamily. ATCase family.</text>
</comment>
<organism>
    <name type="scientific">Thermus aquaticus</name>
    <dbReference type="NCBI Taxonomy" id="271"/>
    <lineage>
        <taxon>Bacteria</taxon>
        <taxon>Thermotogati</taxon>
        <taxon>Deinococcota</taxon>
        <taxon>Deinococci</taxon>
        <taxon>Thermales</taxon>
        <taxon>Thermaceae</taxon>
        <taxon>Thermus</taxon>
    </lineage>
</organism>
<gene>
    <name evidence="1" type="primary">pyrB</name>
</gene>
<accession>P96079</accession>
<dbReference type="EC" id="2.1.3.2" evidence="1"/>
<dbReference type="EMBL" id="Y09536">
    <property type="protein sequence ID" value="CAA70729.1"/>
    <property type="molecule type" value="Genomic_DNA"/>
</dbReference>
<dbReference type="SMR" id="P96079"/>
<dbReference type="UniPathway" id="UPA00070">
    <property type="reaction ID" value="UER00116"/>
</dbReference>
<dbReference type="GO" id="GO:0005829">
    <property type="term" value="C:cytosol"/>
    <property type="evidence" value="ECO:0007669"/>
    <property type="project" value="TreeGrafter"/>
</dbReference>
<dbReference type="GO" id="GO:0016597">
    <property type="term" value="F:amino acid binding"/>
    <property type="evidence" value="ECO:0007669"/>
    <property type="project" value="InterPro"/>
</dbReference>
<dbReference type="GO" id="GO:0004070">
    <property type="term" value="F:aspartate carbamoyltransferase activity"/>
    <property type="evidence" value="ECO:0007669"/>
    <property type="project" value="UniProtKB-UniRule"/>
</dbReference>
<dbReference type="GO" id="GO:0006207">
    <property type="term" value="P:'de novo' pyrimidine nucleobase biosynthetic process"/>
    <property type="evidence" value="ECO:0007669"/>
    <property type="project" value="InterPro"/>
</dbReference>
<dbReference type="GO" id="GO:0044205">
    <property type="term" value="P:'de novo' UMP biosynthetic process"/>
    <property type="evidence" value="ECO:0007669"/>
    <property type="project" value="UniProtKB-UniRule"/>
</dbReference>
<dbReference type="GO" id="GO:0006520">
    <property type="term" value="P:amino acid metabolic process"/>
    <property type="evidence" value="ECO:0007669"/>
    <property type="project" value="InterPro"/>
</dbReference>
<dbReference type="Gene3D" id="3.40.50.1370">
    <property type="entry name" value="Aspartate/ornithine carbamoyltransferase"/>
    <property type="match status" value="2"/>
</dbReference>
<dbReference type="HAMAP" id="MF_00001">
    <property type="entry name" value="Asp_carb_tr"/>
    <property type="match status" value="1"/>
</dbReference>
<dbReference type="InterPro" id="IPR006132">
    <property type="entry name" value="Asp/Orn_carbamoyltranf_P-bd"/>
</dbReference>
<dbReference type="InterPro" id="IPR006130">
    <property type="entry name" value="Asp/Orn_carbamoylTrfase"/>
</dbReference>
<dbReference type="InterPro" id="IPR036901">
    <property type="entry name" value="Asp/Orn_carbamoylTrfase_sf"/>
</dbReference>
<dbReference type="InterPro" id="IPR002082">
    <property type="entry name" value="Asp_carbamoyltransf"/>
</dbReference>
<dbReference type="InterPro" id="IPR006131">
    <property type="entry name" value="Asp_carbamoyltransf_Asp/Orn-bd"/>
</dbReference>
<dbReference type="NCBIfam" id="TIGR00670">
    <property type="entry name" value="asp_carb_tr"/>
    <property type="match status" value="1"/>
</dbReference>
<dbReference type="NCBIfam" id="NF002032">
    <property type="entry name" value="PRK00856.1"/>
    <property type="match status" value="1"/>
</dbReference>
<dbReference type="PANTHER" id="PTHR45753:SF6">
    <property type="entry name" value="ASPARTATE CARBAMOYLTRANSFERASE"/>
    <property type="match status" value="1"/>
</dbReference>
<dbReference type="PANTHER" id="PTHR45753">
    <property type="entry name" value="ORNITHINE CARBAMOYLTRANSFERASE, MITOCHONDRIAL"/>
    <property type="match status" value="1"/>
</dbReference>
<dbReference type="Pfam" id="PF00185">
    <property type="entry name" value="OTCace"/>
    <property type="match status" value="1"/>
</dbReference>
<dbReference type="Pfam" id="PF02729">
    <property type="entry name" value="OTCace_N"/>
    <property type="match status" value="1"/>
</dbReference>
<dbReference type="PRINTS" id="PR00100">
    <property type="entry name" value="AOTCASE"/>
</dbReference>
<dbReference type="PRINTS" id="PR00101">
    <property type="entry name" value="ATCASE"/>
</dbReference>
<dbReference type="SUPFAM" id="SSF53671">
    <property type="entry name" value="Aspartate/ornithine carbamoyltransferase"/>
    <property type="match status" value="1"/>
</dbReference>
<dbReference type="PROSITE" id="PS00097">
    <property type="entry name" value="CARBAMOYLTRANSFERASE"/>
    <property type="match status" value="1"/>
</dbReference>
<evidence type="ECO:0000255" key="1">
    <source>
        <dbReference type="HAMAP-Rule" id="MF_00001"/>
    </source>
</evidence>
<evidence type="ECO:0000305" key="2"/>
<protein>
    <recommendedName>
        <fullName evidence="1">Aspartate carbamoyltransferase catalytic subunit</fullName>
        <ecNumber evidence="1">2.1.3.2</ecNumber>
    </recommendedName>
    <alternativeName>
        <fullName evidence="1">Aspartate transcarbamylase</fullName>
        <shortName evidence="1">ATCase</shortName>
    </alternativeName>
</protein>
<feature type="chain" id="PRO_0000113219" description="Aspartate carbamoyltransferase catalytic subunit">
    <location>
        <begin position="1"/>
        <end position="301"/>
    </location>
</feature>
<feature type="binding site" evidence="1">
    <location>
        <position position="54"/>
    </location>
    <ligand>
        <name>carbamoyl phosphate</name>
        <dbReference type="ChEBI" id="CHEBI:58228"/>
    </ligand>
</feature>
<feature type="binding site" evidence="1">
    <location>
        <position position="55"/>
    </location>
    <ligand>
        <name>carbamoyl phosphate</name>
        <dbReference type="ChEBI" id="CHEBI:58228"/>
    </ligand>
</feature>
<feature type="binding site" evidence="1">
    <location>
        <position position="82"/>
    </location>
    <ligand>
        <name>L-aspartate</name>
        <dbReference type="ChEBI" id="CHEBI:29991"/>
    </ligand>
</feature>
<feature type="binding site" evidence="1">
    <location>
        <position position="104"/>
    </location>
    <ligand>
        <name>carbamoyl phosphate</name>
        <dbReference type="ChEBI" id="CHEBI:58228"/>
    </ligand>
</feature>
<feature type="binding site" evidence="1">
    <location>
        <position position="132"/>
    </location>
    <ligand>
        <name>carbamoyl phosphate</name>
        <dbReference type="ChEBI" id="CHEBI:58228"/>
    </ligand>
</feature>
<feature type="binding site" evidence="1">
    <location>
        <position position="135"/>
    </location>
    <ligand>
        <name>carbamoyl phosphate</name>
        <dbReference type="ChEBI" id="CHEBI:58228"/>
    </ligand>
</feature>
<feature type="binding site" evidence="1">
    <location>
        <position position="165"/>
    </location>
    <ligand>
        <name>L-aspartate</name>
        <dbReference type="ChEBI" id="CHEBI:29991"/>
    </ligand>
</feature>
<feature type="binding site" evidence="1">
    <location>
        <position position="217"/>
    </location>
    <ligand>
        <name>L-aspartate</name>
        <dbReference type="ChEBI" id="CHEBI:29991"/>
    </ligand>
</feature>
<feature type="binding site" evidence="1">
    <location>
        <position position="257"/>
    </location>
    <ligand>
        <name>carbamoyl phosphate</name>
        <dbReference type="ChEBI" id="CHEBI:58228"/>
    </ligand>
</feature>
<feature type="binding site" evidence="1">
    <location>
        <position position="258"/>
    </location>
    <ligand>
        <name>carbamoyl phosphate</name>
        <dbReference type="ChEBI" id="CHEBI:58228"/>
    </ligand>
</feature>
<name>PYRB_THEAQ</name>
<proteinExistence type="inferred from homology"/>
<keyword id="KW-0665">Pyrimidine biosynthesis</keyword>
<keyword id="KW-0808">Transferase</keyword>